<comment type="function">
    <text evidence="1">IGPS catalyzes the conversion of PRFAR and glutamine to IGP, AICAR and glutamate. The HisF subunit catalyzes the cyclization activity that produces IGP and AICAR from PRFAR using the ammonia provided by the HisH subunit.</text>
</comment>
<comment type="catalytic activity">
    <reaction evidence="1">
        <text>5-[(5-phospho-1-deoxy-D-ribulos-1-ylimino)methylamino]-1-(5-phospho-beta-D-ribosyl)imidazole-4-carboxamide + L-glutamine = D-erythro-1-(imidazol-4-yl)glycerol 3-phosphate + 5-amino-1-(5-phospho-beta-D-ribosyl)imidazole-4-carboxamide + L-glutamate + H(+)</text>
        <dbReference type="Rhea" id="RHEA:24793"/>
        <dbReference type="ChEBI" id="CHEBI:15378"/>
        <dbReference type="ChEBI" id="CHEBI:29985"/>
        <dbReference type="ChEBI" id="CHEBI:58278"/>
        <dbReference type="ChEBI" id="CHEBI:58359"/>
        <dbReference type="ChEBI" id="CHEBI:58475"/>
        <dbReference type="ChEBI" id="CHEBI:58525"/>
        <dbReference type="EC" id="4.3.2.10"/>
    </reaction>
</comment>
<comment type="pathway">
    <text evidence="1">Amino-acid biosynthesis; L-histidine biosynthesis; L-histidine from 5-phospho-alpha-D-ribose 1-diphosphate: step 5/9.</text>
</comment>
<comment type="subunit">
    <text evidence="1">Heterodimer of HisH and HisF.</text>
</comment>
<comment type="subcellular location">
    <subcellularLocation>
        <location evidence="1">Cytoplasm</location>
    </subcellularLocation>
</comment>
<comment type="similarity">
    <text evidence="1">Belongs to the HisA/HisF family.</text>
</comment>
<reference key="1">
    <citation type="journal article" date="2006" name="J. Bacteriol.">
        <title>Whole-genome sequence of Listeria welshimeri reveals common steps in genome reduction with Listeria innocua as compared to Listeria monocytogenes.</title>
        <authorList>
            <person name="Hain T."/>
            <person name="Steinweg C."/>
            <person name="Kuenne C.T."/>
            <person name="Billion A."/>
            <person name="Ghai R."/>
            <person name="Chatterjee S.S."/>
            <person name="Domann E."/>
            <person name="Kaerst U."/>
            <person name="Goesmann A."/>
            <person name="Bekel T."/>
            <person name="Bartels D."/>
            <person name="Kaiser O."/>
            <person name="Meyer F."/>
            <person name="Puehler A."/>
            <person name="Weisshaar B."/>
            <person name="Wehland J."/>
            <person name="Liang C."/>
            <person name="Dandekar T."/>
            <person name="Lampidis R."/>
            <person name="Kreft J."/>
            <person name="Goebel W."/>
            <person name="Chakraborty T."/>
        </authorList>
    </citation>
    <scope>NUCLEOTIDE SEQUENCE [LARGE SCALE GENOMIC DNA]</scope>
    <source>
        <strain>ATCC 35897 / DSM 20650 / CCUG 15529 / CIP 8149 / NCTC 11857 / SLCC 5334 / V8</strain>
    </source>
</reference>
<proteinExistence type="inferred from homology"/>
<dbReference type="EC" id="4.3.2.10" evidence="1"/>
<dbReference type="EMBL" id="AM263198">
    <property type="protein sequence ID" value="CAK19947.1"/>
    <property type="molecule type" value="Genomic_DNA"/>
</dbReference>
<dbReference type="RefSeq" id="WP_011701374.1">
    <property type="nucleotide sequence ID" value="NC_008555.1"/>
</dbReference>
<dbReference type="SMR" id="A0AG15"/>
<dbReference type="STRING" id="386043.lwe0529"/>
<dbReference type="GeneID" id="61188417"/>
<dbReference type="KEGG" id="lwe:lwe0529"/>
<dbReference type="eggNOG" id="COG0107">
    <property type="taxonomic scope" value="Bacteria"/>
</dbReference>
<dbReference type="HOGENOM" id="CLU_048577_4_0_9"/>
<dbReference type="OrthoDB" id="9781903at2"/>
<dbReference type="UniPathway" id="UPA00031">
    <property type="reaction ID" value="UER00010"/>
</dbReference>
<dbReference type="Proteomes" id="UP000000779">
    <property type="component" value="Chromosome"/>
</dbReference>
<dbReference type="GO" id="GO:0005737">
    <property type="term" value="C:cytoplasm"/>
    <property type="evidence" value="ECO:0007669"/>
    <property type="project" value="UniProtKB-SubCell"/>
</dbReference>
<dbReference type="GO" id="GO:0000107">
    <property type="term" value="F:imidazoleglycerol-phosphate synthase activity"/>
    <property type="evidence" value="ECO:0007669"/>
    <property type="project" value="UniProtKB-UniRule"/>
</dbReference>
<dbReference type="GO" id="GO:0016829">
    <property type="term" value="F:lyase activity"/>
    <property type="evidence" value="ECO:0007669"/>
    <property type="project" value="UniProtKB-KW"/>
</dbReference>
<dbReference type="GO" id="GO:0000105">
    <property type="term" value="P:L-histidine biosynthetic process"/>
    <property type="evidence" value="ECO:0007669"/>
    <property type="project" value="UniProtKB-UniRule"/>
</dbReference>
<dbReference type="CDD" id="cd04731">
    <property type="entry name" value="HisF"/>
    <property type="match status" value="1"/>
</dbReference>
<dbReference type="FunFam" id="3.20.20.70:FF:000006">
    <property type="entry name" value="Imidazole glycerol phosphate synthase subunit HisF"/>
    <property type="match status" value="1"/>
</dbReference>
<dbReference type="Gene3D" id="3.20.20.70">
    <property type="entry name" value="Aldolase class I"/>
    <property type="match status" value="1"/>
</dbReference>
<dbReference type="HAMAP" id="MF_01013">
    <property type="entry name" value="HisF"/>
    <property type="match status" value="1"/>
</dbReference>
<dbReference type="InterPro" id="IPR013785">
    <property type="entry name" value="Aldolase_TIM"/>
</dbReference>
<dbReference type="InterPro" id="IPR006062">
    <property type="entry name" value="His_biosynth"/>
</dbReference>
<dbReference type="InterPro" id="IPR004651">
    <property type="entry name" value="HisF"/>
</dbReference>
<dbReference type="InterPro" id="IPR050064">
    <property type="entry name" value="IGPS_HisA/HisF"/>
</dbReference>
<dbReference type="InterPro" id="IPR011060">
    <property type="entry name" value="RibuloseP-bd_barrel"/>
</dbReference>
<dbReference type="NCBIfam" id="TIGR00735">
    <property type="entry name" value="hisF"/>
    <property type="match status" value="1"/>
</dbReference>
<dbReference type="PANTHER" id="PTHR21235:SF2">
    <property type="entry name" value="IMIDAZOLE GLYCEROL PHOSPHATE SYNTHASE HISHF"/>
    <property type="match status" value="1"/>
</dbReference>
<dbReference type="PANTHER" id="PTHR21235">
    <property type="entry name" value="IMIDAZOLE GLYCEROL PHOSPHATE SYNTHASE SUBUNIT HISF/H IGP SYNTHASE SUBUNIT HISF/H"/>
    <property type="match status" value="1"/>
</dbReference>
<dbReference type="Pfam" id="PF00977">
    <property type="entry name" value="His_biosynth"/>
    <property type="match status" value="1"/>
</dbReference>
<dbReference type="SUPFAM" id="SSF51366">
    <property type="entry name" value="Ribulose-phoshate binding barrel"/>
    <property type="match status" value="1"/>
</dbReference>
<accession>A0AG15</accession>
<feature type="chain" id="PRO_1000063078" description="Imidazole glycerol phosphate synthase subunit HisF">
    <location>
        <begin position="1"/>
        <end position="251"/>
    </location>
</feature>
<feature type="active site" evidence="1">
    <location>
        <position position="11"/>
    </location>
</feature>
<feature type="active site" evidence="1">
    <location>
        <position position="130"/>
    </location>
</feature>
<keyword id="KW-0028">Amino-acid biosynthesis</keyword>
<keyword id="KW-0963">Cytoplasm</keyword>
<keyword id="KW-0368">Histidine biosynthesis</keyword>
<keyword id="KW-0456">Lyase</keyword>
<organism>
    <name type="scientific">Listeria welshimeri serovar 6b (strain ATCC 35897 / DSM 20650 / CCUG 15529 / CIP 8149 / NCTC 11857 / SLCC 5334 / V8)</name>
    <dbReference type="NCBI Taxonomy" id="386043"/>
    <lineage>
        <taxon>Bacteria</taxon>
        <taxon>Bacillati</taxon>
        <taxon>Bacillota</taxon>
        <taxon>Bacilli</taxon>
        <taxon>Bacillales</taxon>
        <taxon>Listeriaceae</taxon>
        <taxon>Listeria</taxon>
    </lineage>
</organism>
<evidence type="ECO:0000255" key="1">
    <source>
        <dbReference type="HAMAP-Rule" id="MF_01013"/>
    </source>
</evidence>
<name>HIS6_LISW6</name>
<protein>
    <recommendedName>
        <fullName evidence="1">Imidazole glycerol phosphate synthase subunit HisF</fullName>
        <ecNumber evidence="1">4.3.2.10</ecNumber>
    </recommendedName>
    <alternativeName>
        <fullName evidence="1">IGP synthase cyclase subunit</fullName>
    </alternativeName>
    <alternativeName>
        <fullName evidence="1">IGP synthase subunit HisF</fullName>
    </alternativeName>
    <alternativeName>
        <fullName evidence="1">ImGP synthase subunit HisF</fullName>
        <shortName evidence="1">IGPS subunit HisF</shortName>
    </alternativeName>
</protein>
<sequence length="251" mass="26563">MLTKRIIPCLDVTAGRVVKGVNFVSLTDVGDPVEIAKAYNEAGADELVFLDITATVELRQTMIDVVERTAEQVFIPLTVGGGISSVADMKELLQAGADKISLNSAAIKRPELIQEGAKKFGNQCIVVAIDAKWNGTNWHVFTRGGREDTGLDAVKWAKKAVGLGAGEILLTSMDGDGTKNGYDIPLTKAISEAVSVPVIASGGCGNANHMVEVFEQTSATAALAASIFHYGELSITHVKNTLLEKGVNIRP</sequence>
<gene>
    <name evidence="1" type="primary">hisF</name>
    <name type="ordered locus">lwe0529</name>
</gene>